<comment type="function">
    <text evidence="1">Binds to the 23S rRNA.</text>
</comment>
<comment type="cofactor">
    <cofactor evidence="1">
        <name>Zn(2+)</name>
        <dbReference type="ChEBI" id="CHEBI:29105"/>
    </cofactor>
    <text evidence="1">Binds 1 zinc ion per subunit.</text>
</comment>
<comment type="subunit">
    <text evidence="1">Part of the 50S ribosomal subunit. Forms a cluster with proteins L3 and L14.</text>
</comment>
<comment type="similarity">
    <text evidence="1">Belongs to the eukaryotic ribosomal protein eL24 family.</text>
</comment>
<organism>
    <name type="scientific">Metallosphaera sedula (strain ATCC 51363 / DSM 5348 / JCM 9185 / NBRC 15509 / TH2)</name>
    <dbReference type="NCBI Taxonomy" id="399549"/>
    <lineage>
        <taxon>Archaea</taxon>
        <taxon>Thermoproteota</taxon>
        <taxon>Thermoprotei</taxon>
        <taxon>Sulfolobales</taxon>
        <taxon>Sulfolobaceae</taxon>
        <taxon>Metallosphaera</taxon>
    </lineage>
</organism>
<sequence>MVVSHKCSFCGGDIPPATGMMHVRNDGTILWFCSNKCRKYMLKYHKDAKKLKWTTSYSRVR</sequence>
<proteinExistence type="inferred from homology"/>
<gene>
    <name evidence="1" type="primary">rpl24e</name>
    <name type="ordered locus">Msed_0028</name>
</gene>
<keyword id="KW-0479">Metal-binding</keyword>
<keyword id="KW-1185">Reference proteome</keyword>
<keyword id="KW-0687">Ribonucleoprotein</keyword>
<keyword id="KW-0689">Ribosomal protein</keyword>
<keyword id="KW-0694">RNA-binding</keyword>
<keyword id="KW-0699">rRNA-binding</keyword>
<keyword id="KW-0862">Zinc</keyword>
<keyword id="KW-0863">Zinc-finger</keyword>
<reference key="1">
    <citation type="journal article" date="2008" name="Appl. Environ. Microbiol.">
        <title>The genome sequence of the metal-mobilizing, extremely thermoacidophilic archaeon Metallosphaera sedula provides insights into bioleaching-associated metabolism.</title>
        <authorList>
            <person name="Auernik K.S."/>
            <person name="Maezato Y."/>
            <person name="Blum P.H."/>
            <person name="Kelly R.M."/>
        </authorList>
    </citation>
    <scope>NUCLEOTIDE SEQUENCE [LARGE SCALE GENOMIC DNA]</scope>
    <source>
        <strain>ATCC 51363 / DSM 5348 / JCM 9185 / NBRC 15509 / TH2</strain>
    </source>
</reference>
<feature type="chain" id="PRO_1000072835" description="Large ribosomal subunit protein eL24">
    <location>
        <begin position="1"/>
        <end position="61"/>
    </location>
</feature>
<feature type="zinc finger region" description="C4-type" evidence="1">
    <location>
        <begin position="7"/>
        <end position="37"/>
    </location>
</feature>
<feature type="binding site" evidence="1">
    <location>
        <position position="7"/>
    </location>
    <ligand>
        <name>Zn(2+)</name>
        <dbReference type="ChEBI" id="CHEBI:29105"/>
    </ligand>
</feature>
<feature type="binding site" evidence="1">
    <location>
        <position position="10"/>
    </location>
    <ligand>
        <name>Zn(2+)</name>
        <dbReference type="ChEBI" id="CHEBI:29105"/>
    </ligand>
</feature>
<feature type="binding site" evidence="1">
    <location>
        <position position="33"/>
    </location>
    <ligand>
        <name>Zn(2+)</name>
        <dbReference type="ChEBI" id="CHEBI:29105"/>
    </ligand>
</feature>
<feature type="binding site" evidence="1">
    <location>
        <position position="37"/>
    </location>
    <ligand>
        <name>Zn(2+)</name>
        <dbReference type="ChEBI" id="CHEBI:29105"/>
    </ligand>
</feature>
<accession>A4YCQ3</accession>
<protein>
    <recommendedName>
        <fullName evidence="1">Large ribosomal subunit protein eL24</fullName>
    </recommendedName>
    <alternativeName>
        <fullName evidence="2">50S ribosomal protein L24e</fullName>
    </alternativeName>
</protein>
<name>RL24E_METS5</name>
<evidence type="ECO:0000255" key="1">
    <source>
        <dbReference type="HAMAP-Rule" id="MF_00773"/>
    </source>
</evidence>
<evidence type="ECO:0000305" key="2"/>
<dbReference type="EMBL" id="CP000682">
    <property type="protein sequence ID" value="ABP94205.1"/>
    <property type="molecule type" value="Genomic_DNA"/>
</dbReference>
<dbReference type="SMR" id="A4YCQ3"/>
<dbReference type="STRING" id="399549.Msed_0028"/>
<dbReference type="KEGG" id="mse:Msed_0028"/>
<dbReference type="eggNOG" id="arCOG01950">
    <property type="taxonomic scope" value="Archaea"/>
</dbReference>
<dbReference type="HOGENOM" id="CLU_190191_0_0_2"/>
<dbReference type="Proteomes" id="UP000000242">
    <property type="component" value="Chromosome"/>
</dbReference>
<dbReference type="GO" id="GO:1990904">
    <property type="term" value="C:ribonucleoprotein complex"/>
    <property type="evidence" value="ECO:0007669"/>
    <property type="project" value="UniProtKB-KW"/>
</dbReference>
<dbReference type="GO" id="GO:0005840">
    <property type="term" value="C:ribosome"/>
    <property type="evidence" value="ECO:0007669"/>
    <property type="project" value="UniProtKB-KW"/>
</dbReference>
<dbReference type="GO" id="GO:0019843">
    <property type="term" value="F:rRNA binding"/>
    <property type="evidence" value="ECO:0007669"/>
    <property type="project" value="UniProtKB-UniRule"/>
</dbReference>
<dbReference type="GO" id="GO:0003735">
    <property type="term" value="F:structural constituent of ribosome"/>
    <property type="evidence" value="ECO:0007669"/>
    <property type="project" value="InterPro"/>
</dbReference>
<dbReference type="GO" id="GO:0008270">
    <property type="term" value="F:zinc ion binding"/>
    <property type="evidence" value="ECO:0007669"/>
    <property type="project" value="UniProtKB-UniRule"/>
</dbReference>
<dbReference type="GO" id="GO:0006412">
    <property type="term" value="P:translation"/>
    <property type="evidence" value="ECO:0007669"/>
    <property type="project" value="UniProtKB-UniRule"/>
</dbReference>
<dbReference type="CDD" id="cd00472">
    <property type="entry name" value="Ribosomal_L24e_L24"/>
    <property type="match status" value="1"/>
</dbReference>
<dbReference type="Gene3D" id="2.30.170.20">
    <property type="entry name" value="Ribosomal protein L24e"/>
    <property type="match status" value="1"/>
</dbReference>
<dbReference type="HAMAP" id="MF_00773">
    <property type="entry name" value="Ribosomal_eL24"/>
    <property type="match status" value="1"/>
</dbReference>
<dbReference type="InterPro" id="IPR038630">
    <property type="entry name" value="L24e/L24_sf"/>
</dbReference>
<dbReference type="InterPro" id="IPR056366">
    <property type="entry name" value="Ribosomal_eL24"/>
</dbReference>
<dbReference type="InterPro" id="IPR055345">
    <property type="entry name" value="Ribosomal_eL24-rel_arc"/>
</dbReference>
<dbReference type="InterPro" id="IPR000988">
    <property type="entry name" value="Ribosomal_eL24-rel_N"/>
</dbReference>
<dbReference type="InterPro" id="IPR011017">
    <property type="entry name" value="TRASH_dom"/>
</dbReference>
<dbReference type="NCBIfam" id="NF034186">
    <property type="entry name" value="PRK14891.1-1"/>
    <property type="match status" value="1"/>
</dbReference>
<dbReference type="PANTHER" id="PTHR10792">
    <property type="entry name" value="60S RIBOSOMAL PROTEIN L24"/>
    <property type="match status" value="1"/>
</dbReference>
<dbReference type="PANTHER" id="PTHR10792:SF1">
    <property type="entry name" value="RIBOSOMAL PROTEIN L24"/>
    <property type="match status" value="1"/>
</dbReference>
<dbReference type="Pfam" id="PF01246">
    <property type="entry name" value="Ribosomal_L24e"/>
    <property type="match status" value="1"/>
</dbReference>
<dbReference type="SMART" id="SM00746">
    <property type="entry name" value="TRASH"/>
    <property type="match status" value="1"/>
</dbReference>
<dbReference type="SUPFAM" id="SSF57716">
    <property type="entry name" value="Glucocorticoid receptor-like (DNA-binding domain)"/>
    <property type="match status" value="1"/>
</dbReference>